<evidence type="ECO:0000255" key="1">
    <source>
        <dbReference type="HAMAP-Rule" id="MF_00001"/>
    </source>
</evidence>
<dbReference type="EC" id="2.1.3.2" evidence="1"/>
<dbReference type="EMBL" id="CP001390">
    <property type="protein sequence ID" value="ACM21607.1"/>
    <property type="molecule type" value="Genomic_DNA"/>
</dbReference>
<dbReference type="RefSeq" id="WP_012648335.1">
    <property type="nucleotide sequence ID" value="NC_011979.1"/>
</dbReference>
<dbReference type="SMR" id="B9M4S3"/>
<dbReference type="STRING" id="316067.Geob_3264"/>
<dbReference type="KEGG" id="geo:Geob_3264"/>
<dbReference type="eggNOG" id="COG0540">
    <property type="taxonomic scope" value="Bacteria"/>
</dbReference>
<dbReference type="HOGENOM" id="CLU_043846_2_0_7"/>
<dbReference type="OrthoDB" id="9774690at2"/>
<dbReference type="UniPathway" id="UPA00070">
    <property type="reaction ID" value="UER00116"/>
</dbReference>
<dbReference type="Proteomes" id="UP000007721">
    <property type="component" value="Chromosome"/>
</dbReference>
<dbReference type="GO" id="GO:0005829">
    <property type="term" value="C:cytosol"/>
    <property type="evidence" value="ECO:0007669"/>
    <property type="project" value="TreeGrafter"/>
</dbReference>
<dbReference type="GO" id="GO:0016597">
    <property type="term" value="F:amino acid binding"/>
    <property type="evidence" value="ECO:0007669"/>
    <property type="project" value="InterPro"/>
</dbReference>
<dbReference type="GO" id="GO:0004070">
    <property type="term" value="F:aspartate carbamoyltransferase activity"/>
    <property type="evidence" value="ECO:0007669"/>
    <property type="project" value="UniProtKB-UniRule"/>
</dbReference>
<dbReference type="GO" id="GO:0006207">
    <property type="term" value="P:'de novo' pyrimidine nucleobase biosynthetic process"/>
    <property type="evidence" value="ECO:0007669"/>
    <property type="project" value="InterPro"/>
</dbReference>
<dbReference type="GO" id="GO:0044205">
    <property type="term" value="P:'de novo' UMP biosynthetic process"/>
    <property type="evidence" value="ECO:0007669"/>
    <property type="project" value="UniProtKB-UniRule"/>
</dbReference>
<dbReference type="GO" id="GO:0006520">
    <property type="term" value="P:amino acid metabolic process"/>
    <property type="evidence" value="ECO:0007669"/>
    <property type="project" value="InterPro"/>
</dbReference>
<dbReference type="FunFam" id="3.40.50.1370:FF:000007">
    <property type="entry name" value="Aspartate carbamoyltransferase"/>
    <property type="match status" value="1"/>
</dbReference>
<dbReference type="Gene3D" id="3.40.50.1370">
    <property type="entry name" value="Aspartate/ornithine carbamoyltransferase"/>
    <property type="match status" value="2"/>
</dbReference>
<dbReference type="HAMAP" id="MF_00001">
    <property type="entry name" value="Asp_carb_tr"/>
    <property type="match status" value="1"/>
</dbReference>
<dbReference type="InterPro" id="IPR006132">
    <property type="entry name" value="Asp/Orn_carbamoyltranf_P-bd"/>
</dbReference>
<dbReference type="InterPro" id="IPR006130">
    <property type="entry name" value="Asp/Orn_carbamoylTrfase"/>
</dbReference>
<dbReference type="InterPro" id="IPR036901">
    <property type="entry name" value="Asp/Orn_carbamoylTrfase_sf"/>
</dbReference>
<dbReference type="InterPro" id="IPR002082">
    <property type="entry name" value="Asp_carbamoyltransf"/>
</dbReference>
<dbReference type="InterPro" id="IPR006131">
    <property type="entry name" value="Asp_carbamoyltransf_Asp/Orn-bd"/>
</dbReference>
<dbReference type="NCBIfam" id="TIGR00670">
    <property type="entry name" value="asp_carb_tr"/>
    <property type="match status" value="1"/>
</dbReference>
<dbReference type="NCBIfam" id="NF002032">
    <property type="entry name" value="PRK00856.1"/>
    <property type="match status" value="1"/>
</dbReference>
<dbReference type="PANTHER" id="PTHR45753:SF6">
    <property type="entry name" value="ASPARTATE CARBAMOYLTRANSFERASE"/>
    <property type="match status" value="1"/>
</dbReference>
<dbReference type="PANTHER" id="PTHR45753">
    <property type="entry name" value="ORNITHINE CARBAMOYLTRANSFERASE, MITOCHONDRIAL"/>
    <property type="match status" value="1"/>
</dbReference>
<dbReference type="Pfam" id="PF00185">
    <property type="entry name" value="OTCace"/>
    <property type="match status" value="1"/>
</dbReference>
<dbReference type="Pfam" id="PF02729">
    <property type="entry name" value="OTCace_N"/>
    <property type="match status" value="1"/>
</dbReference>
<dbReference type="PRINTS" id="PR00100">
    <property type="entry name" value="AOTCASE"/>
</dbReference>
<dbReference type="PRINTS" id="PR00101">
    <property type="entry name" value="ATCASE"/>
</dbReference>
<dbReference type="SUPFAM" id="SSF53671">
    <property type="entry name" value="Aspartate/ornithine carbamoyltransferase"/>
    <property type="match status" value="1"/>
</dbReference>
<dbReference type="PROSITE" id="PS00097">
    <property type="entry name" value="CARBAMOYLTRANSFERASE"/>
    <property type="match status" value="1"/>
</dbReference>
<sequence>MAFKHKDIIGLQDLTREEIELLLSTAENLKEINSREIKKVPTLRGKTVVNLFYEASTRTRTSFEIAAKRLSADTINITASTSSVTKGETLSDTARNVLAMNPDIIVMRHAVSGAHHYLAKRVSCSVINAGDGAHEHPSQGLLDMLTMRQQFGKLEGLKVAIVGDITHSRVARSDIYGLTRMGANVFLAGPPTMMPPGIERLGNVTVCKDMREAVADADVVMMLRIQLERQGKTLLPTMKEYSRYFGLNQSVLKLAKKDAMVMHPGPINRGVELSSDVADGSQSHILKQVENGVAVRMSMLYHVSGGELPTE</sequence>
<gene>
    <name evidence="1" type="primary">pyrB</name>
    <name type="ordered locus">Geob_3264</name>
</gene>
<feature type="chain" id="PRO_1000116143" description="Aspartate carbamoyltransferase catalytic subunit">
    <location>
        <begin position="1"/>
        <end position="311"/>
    </location>
</feature>
<feature type="binding site" evidence="1">
    <location>
        <position position="58"/>
    </location>
    <ligand>
        <name>carbamoyl phosphate</name>
        <dbReference type="ChEBI" id="CHEBI:58228"/>
    </ligand>
</feature>
<feature type="binding site" evidence="1">
    <location>
        <position position="59"/>
    </location>
    <ligand>
        <name>carbamoyl phosphate</name>
        <dbReference type="ChEBI" id="CHEBI:58228"/>
    </ligand>
</feature>
<feature type="binding site" evidence="1">
    <location>
        <position position="86"/>
    </location>
    <ligand>
        <name>L-aspartate</name>
        <dbReference type="ChEBI" id="CHEBI:29991"/>
    </ligand>
</feature>
<feature type="binding site" evidence="1">
    <location>
        <position position="108"/>
    </location>
    <ligand>
        <name>carbamoyl phosphate</name>
        <dbReference type="ChEBI" id="CHEBI:58228"/>
    </ligand>
</feature>
<feature type="binding site" evidence="1">
    <location>
        <position position="136"/>
    </location>
    <ligand>
        <name>carbamoyl phosphate</name>
        <dbReference type="ChEBI" id="CHEBI:58228"/>
    </ligand>
</feature>
<feature type="binding site" evidence="1">
    <location>
        <position position="139"/>
    </location>
    <ligand>
        <name>carbamoyl phosphate</name>
        <dbReference type="ChEBI" id="CHEBI:58228"/>
    </ligand>
</feature>
<feature type="binding site" evidence="1">
    <location>
        <position position="169"/>
    </location>
    <ligand>
        <name>L-aspartate</name>
        <dbReference type="ChEBI" id="CHEBI:29991"/>
    </ligand>
</feature>
<feature type="binding site" evidence="1">
    <location>
        <position position="224"/>
    </location>
    <ligand>
        <name>L-aspartate</name>
        <dbReference type="ChEBI" id="CHEBI:29991"/>
    </ligand>
</feature>
<feature type="binding site" evidence="1">
    <location>
        <position position="265"/>
    </location>
    <ligand>
        <name>carbamoyl phosphate</name>
        <dbReference type="ChEBI" id="CHEBI:58228"/>
    </ligand>
</feature>
<feature type="binding site" evidence="1">
    <location>
        <position position="266"/>
    </location>
    <ligand>
        <name>carbamoyl phosphate</name>
        <dbReference type="ChEBI" id="CHEBI:58228"/>
    </ligand>
</feature>
<keyword id="KW-0665">Pyrimidine biosynthesis</keyword>
<keyword id="KW-1185">Reference proteome</keyword>
<keyword id="KW-0808">Transferase</keyword>
<name>PYRB_GEODF</name>
<accession>B9M4S3</accession>
<organism>
    <name type="scientific">Geotalea daltonii (strain DSM 22248 / JCM 15807 / FRC-32)</name>
    <name type="common">Geobacter daltonii</name>
    <dbReference type="NCBI Taxonomy" id="316067"/>
    <lineage>
        <taxon>Bacteria</taxon>
        <taxon>Pseudomonadati</taxon>
        <taxon>Thermodesulfobacteriota</taxon>
        <taxon>Desulfuromonadia</taxon>
        <taxon>Geobacterales</taxon>
        <taxon>Geobacteraceae</taxon>
        <taxon>Geotalea</taxon>
    </lineage>
</organism>
<protein>
    <recommendedName>
        <fullName evidence="1">Aspartate carbamoyltransferase catalytic subunit</fullName>
        <ecNumber evidence="1">2.1.3.2</ecNumber>
    </recommendedName>
    <alternativeName>
        <fullName evidence="1">Aspartate transcarbamylase</fullName>
        <shortName evidence="1">ATCase</shortName>
    </alternativeName>
</protein>
<reference key="1">
    <citation type="submission" date="2009-01" db="EMBL/GenBank/DDBJ databases">
        <title>Complete sequence of Geobacter sp. FRC-32.</title>
        <authorList>
            <consortium name="US DOE Joint Genome Institute"/>
            <person name="Lucas S."/>
            <person name="Copeland A."/>
            <person name="Lapidus A."/>
            <person name="Glavina del Rio T."/>
            <person name="Dalin E."/>
            <person name="Tice H."/>
            <person name="Bruce D."/>
            <person name="Goodwin L."/>
            <person name="Pitluck S."/>
            <person name="Saunders E."/>
            <person name="Brettin T."/>
            <person name="Detter J.C."/>
            <person name="Han C."/>
            <person name="Larimer F."/>
            <person name="Land M."/>
            <person name="Hauser L."/>
            <person name="Kyrpides N."/>
            <person name="Ovchinnikova G."/>
            <person name="Kostka J."/>
            <person name="Richardson P."/>
        </authorList>
    </citation>
    <scope>NUCLEOTIDE SEQUENCE [LARGE SCALE GENOMIC DNA]</scope>
    <source>
        <strain>DSM 22248 / JCM 15807 / FRC-32</strain>
    </source>
</reference>
<proteinExistence type="inferred from homology"/>
<comment type="function">
    <text evidence="1">Catalyzes the condensation of carbamoyl phosphate and aspartate to form carbamoyl aspartate and inorganic phosphate, the committed step in the de novo pyrimidine nucleotide biosynthesis pathway.</text>
</comment>
<comment type="catalytic activity">
    <reaction evidence="1">
        <text>carbamoyl phosphate + L-aspartate = N-carbamoyl-L-aspartate + phosphate + H(+)</text>
        <dbReference type="Rhea" id="RHEA:20013"/>
        <dbReference type="ChEBI" id="CHEBI:15378"/>
        <dbReference type="ChEBI" id="CHEBI:29991"/>
        <dbReference type="ChEBI" id="CHEBI:32814"/>
        <dbReference type="ChEBI" id="CHEBI:43474"/>
        <dbReference type="ChEBI" id="CHEBI:58228"/>
        <dbReference type="EC" id="2.1.3.2"/>
    </reaction>
</comment>
<comment type="pathway">
    <text evidence="1">Pyrimidine metabolism; UMP biosynthesis via de novo pathway; (S)-dihydroorotate from bicarbonate: step 2/3.</text>
</comment>
<comment type="subunit">
    <text evidence="1">Heterododecamer (2C3:3R2) of six catalytic PyrB chains organized as two trimers (C3), and six regulatory PyrI chains organized as three dimers (R2).</text>
</comment>
<comment type="similarity">
    <text evidence="1">Belongs to the aspartate/ornithine carbamoyltransferase superfamily. ATCase family.</text>
</comment>